<sequence>MKERIKAICLEKPNNVVVKEVPYPEKSDNDVLIQVESMGICGSDIGAYRGTNPLVTYPRILGHEIVGRVIESGIGMSDGVRVGDRVIVDPYVCCGQCYPCSIGRTNCCESLKVIGVHIDGGMQEVIRHPAHLLTKVPDNLPIHQLPLAEPLTIALHALHRTTLKSGEHIVIIGAGAIGLMAALAAVQYGAIPILVDILEQRLEYAKSLGIEHIVNPHKEDDIKRIKEITSGRMAEVVMEASGANISIKNTLHYASFAGRIALTGWPKTETPLPTNLITFKELNIYGSRTSKGEFEEALDMLATNKINASHIITKCIKFEEIPSFISDLSDHPENYLKINAVF</sequence>
<evidence type="ECO:0000250" key="1"/>
<evidence type="ECO:0000305" key="2"/>
<reference key="1">
    <citation type="journal article" date="1995" name="Science">
        <title>Whole-genome random sequencing and assembly of Haemophilus influenzae Rd.</title>
        <authorList>
            <person name="Fleischmann R.D."/>
            <person name="Adams M.D."/>
            <person name="White O."/>
            <person name="Clayton R.A."/>
            <person name="Kirkness E.F."/>
            <person name="Kerlavage A.R."/>
            <person name="Bult C.J."/>
            <person name="Tomb J.-F."/>
            <person name="Dougherty B.A."/>
            <person name="Merrick J.M."/>
            <person name="McKenney K."/>
            <person name="Sutton G.G."/>
            <person name="FitzHugh W."/>
            <person name="Fields C.A."/>
            <person name="Gocayne J.D."/>
            <person name="Scott J.D."/>
            <person name="Shirley R."/>
            <person name="Liu L.-I."/>
            <person name="Glodek A."/>
            <person name="Kelley J.M."/>
            <person name="Weidman J.F."/>
            <person name="Phillips C.A."/>
            <person name="Spriggs T."/>
            <person name="Hedblom E."/>
            <person name="Cotton M.D."/>
            <person name="Utterback T.R."/>
            <person name="Hanna M.C."/>
            <person name="Nguyen D.T."/>
            <person name="Saudek D.M."/>
            <person name="Brandon R.C."/>
            <person name="Fine L.D."/>
            <person name="Fritchman J.L."/>
            <person name="Fuhrmann J.L."/>
            <person name="Geoghagen N.S.M."/>
            <person name="Gnehm C.L."/>
            <person name="McDonald L.A."/>
            <person name="Small K.V."/>
            <person name="Fraser C.M."/>
            <person name="Smith H.O."/>
            <person name="Venter J.C."/>
        </authorList>
    </citation>
    <scope>NUCLEOTIDE SEQUENCE [LARGE SCALE GENOMIC DNA]</scope>
    <source>
        <strain>ATCC 51907 / DSM 11121 / KW20 / Rd</strain>
    </source>
</reference>
<proteinExistence type="inferred from homology"/>
<keyword id="KW-0479">Metal-binding</keyword>
<keyword id="KW-0560">Oxidoreductase</keyword>
<keyword id="KW-1185">Reference proteome</keyword>
<keyword id="KW-0862">Zinc</keyword>
<name>Y053_HAEIN</name>
<gene>
    <name type="ordered locus">HI_0053</name>
</gene>
<protein>
    <recommendedName>
        <fullName>Uncharacterized zinc-type alcohol dehydrogenase-like protein HI_0053</fullName>
        <ecNumber>1.-.-.-</ecNumber>
    </recommendedName>
</protein>
<organism>
    <name type="scientific">Haemophilus influenzae (strain ATCC 51907 / DSM 11121 / KW20 / Rd)</name>
    <dbReference type="NCBI Taxonomy" id="71421"/>
    <lineage>
        <taxon>Bacteria</taxon>
        <taxon>Pseudomonadati</taxon>
        <taxon>Pseudomonadota</taxon>
        <taxon>Gammaproteobacteria</taxon>
        <taxon>Pasteurellales</taxon>
        <taxon>Pasteurellaceae</taxon>
        <taxon>Haemophilus</taxon>
    </lineage>
</organism>
<dbReference type="EC" id="1.-.-.-"/>
<dbReference type="EMBL" id="L42023">
    <property type="protein sequence ID" value="AAC21731.1"/>
    <property type="molecule type" value="Genomic_DNA"/>
</dbReference>
<dbReference type="PIR" id="F64141">
    <property type="entry name" value="F64141"/>
</dbReference>
<dbReference type="RefSeq" id="NP_438226.1">
    <property type="nucleotide sequence ID" value="NC_000907.1"/>
</dbReference>
<dbReference type="SMR" id="Q57517"/>
<dbReference type="STRING" id="71421.HI_0053"/>
<dbReference type="EnsemblBacteria" id="AAC21731">
    <property type="protein sequence ID" value="AAC21731"/>
    <property type="gene ID" value="HI_0053"/>
</dbReference>
<dbReference type="KEGG" id="hin:HI_0053"/>
<dbReference type="PATRIC" id="fig|71421.8.peg.53"/>
<dbReference type="eggNOG" id="COG1063">
    <property type="taxonomic scope" value="Bacteria"/>
</dbReference>
<dbReference type="HOGENOM" id="CLU_026673_11_0_6"/>
<dbReference type="OrthoDB" id="9773078at2"/>
<dbReference type="PhylomeDB" id="Q57517"/>
<dbReference type="BioCyc" id="HINF71421:G1GJ1-54-MONOMER"/>
<dbReference type="Proteomes" id="UP000000579">
    <property type="component" value="Chromosome"/>
</dbReference>
<dbReference type="GO" id="GO:0046872">
    <property type="term" value="F:metal ion binding"/>
    <property type="evidence" value="ECO:0007669"/>
    <property type="project" value="UniProtKB-KW"/>
</dbReference>
<dbReference type="GO" id="GO:0016491">
    <property type="term" value="F:oxidoreductase activity"/>
    <property type="evidence" value="ECO:0007669"/>
    <property type="project" value="UniProtKB-KW"/>
</dbReference>
<dbReference type="CDD" id="cd08261">
    <property type="entry name" value="Zn_ADH7"/>
    <property type="match status" value="1"/>
</dbReference>
<dbReference type="Gene3D" id="3.90.180.10">
    <property type="entry name" value="Medium-chain alcohol dehydrogenases, catalytic domain"/>
    <property type="match status" value="1"/>
</dbReference>
<dbReference type="Gene3D" id="3.40.50.720">
    <property type="entry name" value="NAD(P)-binding Rossmann-like Domain"/>
    <property type="match status" value="1"/>
</dbReference>
<dbReference type="InterPro" id="IPR013149">
    <property type="entry name" value="ADH-like_C"/>
</dbReference>
<dbReference type="InterPro" id="IPR013154">
    <property type="entry name" value="ADH-like_N"/>
</dbReference>
<dbReference type="InterPro" id="IPR011032">
    <property type="entry name" value="GroES-like_sf"/>
</dbReference>
<dbReference type="InterPro" id="IPR036291">
    <property type="entry name" value="NAD(P)-bd_dom_sf"/>
</dbReference>
<dbReference type="InterPro" id="IPR050129">
    <property type="entry name" value="Zn_alcohol_dh"/>
</dbReference>
<dbReference type="PANTHER" id="PTHR43401">
    <property type="entry name" value="L-THREONINE 3-DEHYDROGENASE"/>
    <property type="match status" value="1"/>
</dbReference>
<dbReference type="PANTHER" id="PTHR43401:SF2">
    <property type="entry name" value="L-THREONINE 3-DEHYDROGENASE"/>
    <property type="match status" value="1"/>
</dbReference>
<dbReference type="Pfam" id="PF08240">
    <property type="entry name" value="ADH_N"/>
    <property type="match status" value="1"/>
</dbReference>
<dbReference type="Pfam" id="PF00107">
    <property type="entry name" value="ADH_zinc_N"/>
    <property type="match status" value="1"/>
</dbReference>
<dbReference type="SUPFAM" id="SSF50129">
    <property type="entry name" value="GroES-like"/>
    <property type="match status" value="1"/>
</dbReference>
<dbReference type="SUPFAM" id="SSF51735">
    <property type="entry name" value="NAD(P)-binding Rossmann-fold domains"/>
    <property type="match status" value="1"/>
</dbReference>
<accession>Q57517</accession>
<feature type="chain" id="PRO_0000160896" description="Uncharacterized zinc-type alcohol dehydrogenase-like protein HI_0053">
    <location>
        <begin position="1"/>
        <end position="342"/>
    </location>
</feature>
<feature type="binding site" evidence="1">
    <location>
        <position position="41"/>
    </location>
    <ligand>
        <name>Zn(2+)</name>
        <dbReference type="ChEBI" id="CHEBI:29105"/>
        <label>1</label>
        <note>catalytic</note>
    </ligand>
</feature>
<feature type="binding site" evidence="1">
    <location>
        <position position="63"/>
    </location>
    <ligand>
        <name>Zn(2+)</name>
        <dbReference type="ChEBI" id="CHEBI:29105"/>
        <label>1</label>
        <note>catalytic</note>
    </ligand>
</feature>
<feature type="binding site" evidence="1">
    <location>
        <position position="94"/>
    </location>
    <ligand>
        <name>Zn(2+)</name>
        <dbReference type="ChEBI" id="CHEBI:29105"/>
        <label>2</label>
    </ligand>
</feature>
<feature type="binding site" evidence="1">
    <location>
        <position position="97"/>
    </location>
    <ligand>
        <name>Zn(2+)</name>
        <dbReference type="ChEBI" id="CHEBI:29105"/>
        <label>2</label>
    </ligand>
</feature>
<feature type="binding site" evidence="1">
    <location>
        <position position="100"/>
    </location>
    <ligand>
        <name>Zn(2+)</name>
        <dbReference type="ChEBI" id="CHEBI:29105"/>
        <label>2</label>
    </ligand>
</feature>
<feature type="binding site" evidence="1">
    <location>
        <position position="108"/>
    </location>
    <ligand>
        <name>Zn(2+)</name>
        <dbReference type="ChEBI" id="CHEBI:29105"/>
        <label>2</label>
    </ligand>
</feature>
<feature type="binding site" evidence="1">
    <location>
        <position position="149"/>
    </location>
    <ligand>
        <name>Zn(2+)</name>
        <dbReference type="ChEBI" id="CHEBI:29105"/>
        <label>1</label>
        <note>catalytic</note>
    </ligand>
</feature>
<comment type="cofactor">
    <cofactor evidence="1">
        <name>Zn(2+)</name>
        <dbReference type="ChEBI" id="CHEBI:29105"/>
    </cofactor>
    <text evidence="1">Binds 2 Zn(2+) ions per subunit.</text>
</comment>
<comment type="similarity">
    <text evidence="2">Belongs to the zinc-containing alcohol dehydrogenase family.</text>
</comment>